<reference key="1">
    <citation type="journal article" date="2011" name="J. Bacteriol.">
        <title>Comparative genomics of 28 Salmonella enterica isolates: evidence for CRISPR-mediated adaptive sublineage evolution.</title>
        <authorList>
            <person name="Fricke W.F."/>
            <person name="Mammel M.K."/>
            <person name="McDermott P.F."/>
            <person name="Tartera C."/>
            <person name="White D.G."/>
            <person name="Leclerc J.E."/>
            <person name="Ravel J."/>
            <person name="Cebula T.A."/>
        </authorList>
    </citation>
    <scope>NUCLEOTIDE SEQUENCE [LARGE SCALE GENOMIC DNA]</scope>
    <source>
        <strain>SL476</strain>
    </source>
</reference>
<name>TRMA_SALHS</name>
<comment type="function">
    <text evidence="1">Dual-specificity methyltransferase that catalyzes the formation of 5-methyluridine at position 54 (m5U54) in all tRNAs, and that of position 341 (m5U341) in tmRNA (transfer-mRNA).</text>
</comment>
<comment type="catalytic activity">
    <reaction evidence="1">
        <text>uridine(54) in tRNA + S-adenosyl-L-methionine = 5-methyluridine(54) in tRNA + S-adenosyl-L-homocysteine + H(+)</text>
        <dbReference type="Rhea" id="RHEA:42712"/>
        <dbReference type="Rhea" id="RHEA-COMP:10167"/>
        <dbReference type="Rhea" id="RHEA-COMP:10193"/>
        <dbReference type="ChEBI" id="CHEBI:15378"/>
        <dbReference type="ChEBI" id="CHEBI:57856"/>
        <dbReference type="ChEBI" id="CHEBI:59789"/>
        <dbReference type="ChEBI" id="CHEBI:65315"/>
        <dbReference type="ChEBI" id="CHEBI:74447"/>
        <dbReference type="EC" id="2.1.1.35"/>
    </reaction>
</comment>
<comment type="catalytic activity">
    <reaction evidence="1">
        <text>uridine(341) in tmRNA + S-adenosyl-L-methionine = 5-methyluridine(341) in tmRNA + S-adenosyl-L-homocysteine + H(+)</text>
        <dbReference type="Rhea" id="RHEA:43612"/>
        <dbReference type="Rhea" id="RHEA-COMP:10630"/>
        <dbReference type="Rhea" id="RHEA-COMP:10631"/>
        <dbReference type="ChEBI" id="CHEBI:15378"/>
        <dbReference type="ChEBI" id="CHEBI:57856"/>
        <dbReference type="ChEBI" id="CHEBI:59789"/>
        <dbReference type="ChEBI" id="CHEBI:65315"/>
        <dbReference type="ChEBI" id="CHEBI:74447"/>
    </reaction>
</comment>
<comment type="similarity">
    <text evidence="1">Belongs to the class I-like SAM-binding methyltransferase superfamily. RNA M5U methyltransferase family. TrmA subfamily.</text>
</comment>
<accession>B4TCR0</accession>
<proteinExistence type="inferred from homology"/>
<keyword id="KW-0489">Methyltransferase</keyword>
<keyword id="KW-0949">S-adenosyl-L-methionine</keyword>
<keyword id="KW-0808">Transferase</keyword>
<keyword id="KW-0819">tRNA processing</keyword>
<dbReference type="EC" id="2.1.1.-" evidence="1"/>
<dbReference type="EC" id="2.1.1.35" evidence="1"/>
<dbReference type="EMBL" id="CP001120">
    <property type="protein sequence ID" value="ACF66597.1"/>
    <property type="molecule type" value="Genomic_DNA"/>
</dbReference>
<dbReference type="RefSeq" id="WP_000186982.1">
    <property type="nucleotide sequence ID" value="NC_011083.1"/>
</dbReference>
<dbReference type="SMR" id="B4TCR0"/>
<dbReference type="KEGG" id="seh:SeHA_C4457"/>
<dbReference type="HOGENOM" id="CLU_043022_0_0_6"/>
<dbReference type="Proteomes" id="UP000001866">
    <property type="component" value="Chromosome"/>
</dbReference>
<dbReference type="GO" id="GO:0005829">
    <property type="term" value="C:cytosol"/>
    <property type="evidence" value="ECO:0007669"/>
    <property type="project" value="TreeGrafter"/>
</dbReference>
<dbReference type="GO" id="GO:0019843">
    <property type="term" value="F:rRNA binding"/>
    <property type="evidence" value="ECO:0007669"/>
    <property type="project" value="TreeGrafter"/>
</dbReference>
<dbReference type="GO" id="GO:0030697">
    <property type="term" value="F:tRNA (uracil(54)-C5)-methyltransferase activity, S-adenosyl methionine-dependent"/>
    <property type="evidence" value="ECO:0007669"/>
    <property type="project" value="UniProtKB-UniRule"/>
</dbReference>
<dbReference type="GO" id="GO:0000049">
    <property type="term" value="F:tRNA binding"/>
    <property type="evidence" value="ECO:0007669"/>
    <property type="project" value="TreeGrafter"/>
</dbReference>
<dbReference type="GO" id="GO:0030488">
    <property type="term" value="P:tRNA methylation"/>
    <property type="evidence" value="ECO:0007669"/>
    <property type="project" value="UniProtKB-UniRule"/>
</dbReference>
<dbReference type="CDD" id="cd02440">
    <property type="entry name" value="AdoMet_MTases"/>
    <property type="match status" value="1"/>
</dbReference>
<dbReference type="FunFam" id="2.40.50.1070:FF:000001">
    <property type="entry name" value="tRNA/tmRNA (uracil-C(5))-methyltransferase"/>
    <property type="match status" value="1"/>
</dbReference>
<dbReference type="FunFam" id="3.40.50.150:FF:000012">
    <property type="entry name" value="tRNA/tmRNA (uracil-C(5))-methyltransferase"/>
    <property type="match status" value="1"/>
</dbReference>
<dbReference type="Gene3D" id="2.40.50.1070">
    <property type="match status" value="1"/>
</dbReference>
<dbReference type="Gene3D" id="3.40.50.150">
    <property type="entry name" value="Vaccinia Virus protein VP39"/>
    <property type="match status" value="1"/>
</dbReference>
<dbReference type="HAMAP" id="MF_01011">
    <property type="entry name" value="RNA_methyltr_TrmA"/>
    <property type="match status" value="1"/>
</dbReference>
<dbReference type="InterPro" id="IPR030390">
    <property type="entry name" value="MeTrfase_TrmA_AS"/>
</dbReference>
<dbReference type="InterPro" id="IPR030391">
    <property type="entry name" value="MeTrfase_TrmA_CS"/>
</dbReference>
<dbReference type="InterPro" id="IPR029063">
    <property type="entry name" value="SAM-dependent_MTases_sf"/>
</dbReference>
<dbReference type="InterPro" id="IPR011869">
    <property type="entry name" value="TrmA_MeTrfase"/>
</dbReference>
<dbReference type="InterPro" id="IPR010280">
    <property type="entry name" value="U5_MeTrfase_fam"/>
</dbReference>
<dbReference type="NCBIfam" id="TIGR02143">
    <property type="entry name" value="trmA_only"/>
    <property type="match status" value="1"/>
</dbReference>
<dbReference type="PANTHER" id="PTHR47790">
    <property type="entry name" value="TRNA/TMRNA (URACIL-C(5))-METHYLTRANSFERASE"/>
    <property type="match status" value="1"/>
</dbReference>
<dbReference type="PANTHER" id="PTHR47790:SF2">
    <property type="entry name" value="TRNA_TMRNA (URACIL-C(5))-METHYLTRANSFERASE"/>
    <property type="match status" value="1"/>
</dbReference>
<dbReference type="Pfam" id="PF05958">
    <property type="entry name" value="tRNA_U5-meth_tr"/>
    <property type="match status" value="1"/>
</dbReference>
<dbReference type="SUPFAM" id="SSF53335">
    <property type="entry name" value="S-adenosyl-L-methionine-dependent methyltransferases"/>
    <property type="match status" value="1"/>
</dbReference>
<dbReference type="PROSITE" id="PS51687">
    <property type="entry name" value="SAM_MT_RNA_M5U"/>
    <property type="match status" value="1"/>
</dbReference>
<dbReference type="PROSITE" id="PS01230">
    <property type="entry name" value="TRMA_1"/>
    <property type="match status" value="1"/>
</dbReference>
<dbReference type="PROSITE" id="PS01231">
    <property type="entry name" value="TRMA_2"/>
    <property type="match status" value="1"/>
</dbReference>
<sequence length="366" mass="41815">MTPEHLPTEQYEAQLAEKVARLQSMMAPFSGLVPEVFRSPVSHYRMRAEFRLWHDGDDLYHIMFDQQTKSRIRVDTFPAASQLINTLMKAMIAGVRDNHALRHKLFQMDYLTTLSNQAVVSLLYHKKLDEEWREAATALRDALRAQGLNVHLIGRATKTKIELDQDYIDERLPVAGKEMIYRQVENSFTQPNAAMNIQMLEWALEVTKDSKGDLLELYCGNGNFSLALARNFNRVLATEIAKPSVAAAQYNIAANHIDNVQIIRMAAEEFTQAMNGVREFNRLQGIDLKGYQCETIFVDPPRSGLDSETEKMVQAYPRILYISCNPETLCKNLETLSQTHTVSRLALFDQFPYTHHMECGVLLTAR</sequence>
<gene>
    <name evidence="1" type="primary">trmA</name>
    <name type="ordered locus">SeHA_C4457</name>
</gene>
<organism>
    <name type="scientific">Salmonella heidelberg (strain SL476)</name>
    <dbReference type="NCBI Taxonomy" id="454169"/>
    <lineage>
        <taxon>Bacteria</taxon>
        <taxon>Pseudomonadati</taxon>
        <taxon>Pseudomonadota</taxon>
        <taxon>Gammaproteobacteria</taxon>
        <taxon>Enterobacterales</taxon>
        <taxon>Enterobacteriaceae</taxon>
        <taxon>Salmonella</taxon>
    </lineage>
</organism>
<evidence type="ECO:0000255" key="1">
    <source>
        <dbReference type="HAMAP-Rule" id="MF_01011"/>
    </source>
</evidence>
<protein>
    <recommendedName>
        <fullName evidence="1">tRNA/tmRNA (uracil-C(5))-methyltransferase</fullName>
        <ecNumber evidence="1">2.1.1.-</ecNumber>
        <ecNumber evidence="1">2.1.1.35</ecNumber>
    </recommendedName>
    <alternativeName>
        <fullName evidence="1">tRNA (uracil(54)-C(5))-methyltransferase</fullName>
    </alternativeName>
    <alternativeName>
        <fullName evidence="1">tRNA(m5U54)-methyltransferase</fullName>
        <shortName evidence="1">RUMT</shortName>
    </alternativeName>
    <alternativeName>
        <fullName evidence="1">tmRNA (uracil(341)-C(5))-methyltransferase</fullName>
    </alternativeName>
</protein>
<feature type="chain" id="PRO_1000198554" description="tRNA/tmRNA (uracil-C(5))-methyltransferase">
    <location>
        <begin position="1"/>
        <end position="366"/>
    </location>
</feature>
<feature type="active site" description="Nucleophile" evidence="1">
    <location>
        <position position="324"/>
    </location>
</feature>
<feature type="active site" description="Proton acceptor" evidence="1">
    <location>
        <position position="358"/>
    </location>
</feature>
<feature type="binding site" evidence="1">
    <location>
        <position position="190"/>
    </location>
    <ligand>
        <name>S-adenosyl-L-methionine</name>
        <dbReference type="ChEBI" id="CHEBI:59789"/>
    </ligand>
</feature>
<feature type="binding site" evidence="1">
    <location>
        <position position="218"/>
    </location>
    <ligand>
        <name>S-adenosyl-L-methionine</name>
        <dbReference type="ChEBI" id="CHEBI:59789"/>
    </ligand>
</feature>
<feature type="binding site" evidence="1">
    <location>
        <position position="223"/>
    </location>
    <ligand>
        <name>S-adenosyl-L-methionine</name>
        <dbReference type="ChEBI" id="CHEBI:59789"/>
    </ligand>
</feature>
<feature type="binding site" evidence="1">
    <location>
        <position position="239"/>
    </location>
    <ligand>
        <name>S-adenosyl-L-methionine</name>
        <dbReference type="ChEBI" id="CHEBI:59789"/>
    </ligand>
</feature>
<feature type="binding site" evidence="1">
    <location>
        <position position="299"/>
    </location>
    <ligand>
        <name>S-adenosyl-L-methionine</name>
        <dbReference type="ChEBI" id="CHEBI:59789"/>
    </ligand>
</feature>